<reference key="1">
    <citation type="journal article" date="2007" name="Entomotech">
        <title>Molecular cloning of Piwi and Aubergine homolog genes from the silkworm, Bombyx mori.</title>
        <authorList>
            <person name="Tatsuke T."/>
            <person name="Tsukioka H."/>
            <person name="Sakashita K."/>
            <person name="Mitsunobu H."/>
            <person name="Lee J."/>
            <person name="Kawaguchi Y."/>
            <person name="Kusakabe T."/>
        </authorList>
    </citation>
    <scope>NUCLEOTIDE SEQUENCE [MRNA]</scope>
</reference>
<reference key="2">
    <citation type="journal article" date="2008" name="Biochem. Biophys. Res. Commun.">
        <title>Developmentally synchronized expression of two Bombyx mori Piwi subfamily genes, SIWI and BmAGO3 in germ-line cells.</title>
        <authorList>
            <person name="Kawaoka S."/>
            <person name="Minami K."/>
            <person name="Katsuma S."/>
            <person name="Mita K."/>
            <person name="Shimada T."/>
        </authorList>
    </citation>
    <scope>NUCLEOTIDE SEQUENCE [MRNA]</scope>
    <scope>FUNCTION</scope>
    <scope>TISSUE SPECIFICITY</scope>
</reference>
<reference key="3">
    <citation type="journal article" date="2008" name="Insect Biochem. Mol. Biol.">
        <title>The genome of a lepidopteran model insect, the silkworm Bombyx mori.</title>
        <authorList>
            <consortium name="International Silkworm Genome Consortium"/>
        </authorList>
    </citation>
    <scope>NUCLEOTIDE SEQUENCE [LARGE SCALE GENOMIC DNA]</scope>
    <source>
        <strain>p50T</strain>
    </source>
</reference>
<reference key="4">
    <citation type="journal article" date="2009" name="RNA">
        <title>The Bombyx ovary-derived cell line endogenously expresses PIWI/PIWI-interacting RNA complexes.</title>
        <authorList>
            <person name="Kawaoka S."/>
            <person name="Hayashi N."/>
            <person name="Suzuki Y."/>
            <person name="Abe H."/>
            <person name="Sugano S."/>
            <person name="Tomari Y."/>
            <person name="Shimada T."/>
            <person name="Katsuma S."/>
        </authorList>
    </citation>
    <scope>FUNCTION</scope>
</reference>
<reference key="5">
    <citation type="journal article" date="2014" name="RNA">
        <title>The MID-PIWI module of Piwi proteins specifies nucleotide- and strand-biases of piRNAs.</title>
        <authorList>
            <person name="Cora E."/>
            <person name="Pandey R.R."/>
            <person name="Xiol J."/>
            <person name="Taylor J."/>
            <person name="Sachidanandam R."/>
            <person name="McCarthy A.A."/>
            <person name="Pillai R.S."/>
        </authorList>
    </citation>
    <scope>FUNCTION</scope>
    <scope>MUTAGENESIS OF TYR-633</scope>
</reference>
<reference key="6">
    <citation type="journal article" date="2013" name="RNA">
        <title>Mitochondrial protein BmPAPI modulates the length of mature piRNAs.</title>
        <authorList>
            <person name="Honda S."/>
            <person name="Kirino Y."/>
            <person name="Maragkakis M."/>
            <person name="Alexiou P."/>
            <person name="Ohtaki A."/>
            <person name="Murali R."/>
            <person name="Mourelatos Z."/>
            <person name="Kirino Y."/>
        </authorList>
    </citation>
    <scope>INTERACTION WITH PAPI</scope>
    <scope>DOMAIN</scope>
</reference>
<reference key="7">
    <citation type="journal article" date="2015" name="Cell Rep.">
        <title>Respective functions of two distinct Siwi complexes assembled during PIWI-interacting RNA biogenesis in Bombyx germ cells.</title>
        <authorList>
            <person name="Nishida K.M."/>
            <person name="Iwasaki Y.W."/>
            <person name="Murota Y."/>
            <person name="Nagao A."/>
            <person name="Mannen T."/>
            <person name="Kato Y."/>
            <person name="Siomi H."/>
            <person name="Siomi M.C."/>
        </authorList>
    </citation>
    <scope>FUNCTION</scope>
    <scope>SUBCELLULAR LOCATION</scope>
</reference>
<evidence type="ECO:0000250" key="1">
    <source>
        <dbReference type="UniProtKB" id="A8D8P8"/>
    </source>
</evidence>
<evidence type="ECO:0000255" key="2">
    <source>
        <dbReference type="PROSITE-ProRule" id="PRU00142"/>
    </source>
</evidence>
<evidence type="ECO:0000255" key="3">
    <source>
        <dbReference type="PROSITE-ProRule" id="PRU00150"/>
    </source>
</evidence>
<evidence type="ECO:0000256" key="4">
    <source>
        <dbReference type="SAM" id="MobiDB-lite"/>
    </source>
</evidence>
<evidence type="ECO:0000269" key="5">
    <source>
    </source>
</evidence>
<evidence type="ECO:0000269" key="6">
    <source>
    </source>
</evidence>
<evidence type="ECO:0000269" key="7">
    <source>
    </source>
</evidence>
<evidence type="ECO:0000269" key="8">
    <source>
    </source>
</evidence>
<evidence type="ECO:0000269" key="9">
    <source>
    </source>
</evidence>
<evidence type="ECO:0000303" key="10">
    <source>
    </source>
</evidence>
<evidence type="ECO:0000305" key="11"/>
<sequence>MADPGKGRGRSLALLQALKKSQMMDSPSQSESQSPESTPEQSTAPSTIASATPSTSGVSIGGRGRAAALMLAKMQQKPGSTTPAIFVPPSSTSAPTAGTGRGFKLLQNLQASQKASSQIASSQVTSSAQSDIKDLTEKMSETSVSAQASSVAKNKYFREVKDTPPVVKKGETGVPIEVTCNYIYLNFKENIVFEYEVKFEPDQDYKHLRFKLLNEHIEHFKEKTFDGTTLYVPHELPDAVRNLVSTNPYDQSKVNVSIIFRRTRRLSEMIHIYNVMFKCIMKDLKLIRFGRQHYNEHAAIQIPQHKLEVWPGYVTAVDEYEGGLMLTLDSTHRVLRTQTVLSLIKEVVQTEGANWKRKMTDILIGASVMTTYNKKLFRVDTIDDKMSPRSTFEKTEKGETVQISFIDYYKKNYGIEIMDWDQPLLISRDTKRMPGSDTPTDFMICLIPELCQLTGLTDDQRSNFRLMKDVATYTRITPNQRHAAFKKYIESVMKNETAKSRLAGWGLSIAPETVNLTARTLPPETLYFGDNVRVPGKPNAEWNSEVTKHSVMQAVDIMRWVLLFTQRDKQVAMDFLSTLKRNCRPMGIMVSDAELVPLANDRTDTYVLALKKCITSSVQLVVAICSTKRDDRYAAIKKVCCADNPVPSQVINARTLMNTNKIRSITQKILLQLNCKLGGTLWSISIPFKSAMIVGIDSYHDPSRRNRSVCSFVASYNQSMTLWYSKVIFQEKGQEIVDGLKCCLVDALTHYLRSNGQLPDRIIIYRDGVGDGQLKLLQQYEIPQMKICFTILGSNYQPTLTYVVVQKRINTRIFLKSRDGYDNPNPGTVVDHCITRRDWYDFLIVSQKVTQGTVTPTHYVVVYDDSGITPDQCQRLTYKMCHLYYNWPGTVRVPAPCQYAHKLSYLVGQCVHAQPSDVLVDKLFFL</sequence>
<protein>
    <recommendedName>
        <fullName>Piwi-like protein Ago3</fullName>
        <shortName evidence="10">BmAGO3</shortName>
        <ecNumber>3.1.26.-</ecNumber>
    </recommendedName>
</protein>
<organism>
    <name type="scientific">Bombyx mori</name>
    <name type="common">Silk moth</name>
    <dbReference type="NCBI Taxonomy" id="7091"/>
    <lineage>
        <taxon>Eukaryota</taxon>
        <taxon>Metazoa</taxon>
        <taxon>Ecdysozoa</taxon>
        <taxon>Arthropoda</taxon>
        <taxon>Hexapoda</taxon>
        <taxon>Insecta</taxon>
        <taxon>Pterygota</taxon>
        <taxon>Neoptera</taxon>
        <taxon>Endopterygota</taxon>
        <taxon>Lepidoptera</taxon>
        <taxon>Glossata</taxon>
        <taxon>Ditrysia</taxon>
        <taxon>Bombycoidea</taxon>
        <taxon>Bombycidae</taxon>
        <taxon>Bombycinae</taxon>
        <taxon>Bombyx</taxon>
    </lineage>
</organism>
<name>AGO3_BOMMO</name>
<comment type="function">
    <text evidence="5 6 8 9">Endoribonuclease that plays a central role during spermatogenesis by repressing transposable elements and preventing their mobilization, which is essential for the germline integrity (PubMed:19460866). Plays an essential role in meiotic differentiation of spermatocytes, germ cell differentiation and in self-renewal of spermatogonial stem cells (PubMed:19460866, PubMed:25558067). Its presence in oocytes suggests that it may participate in similar functions during oogenesis in females (PubMed:18191035). Acts via the piRNA metabolic process, which mediates the repression of transposable elements during meiosis by forming complexes composed of piRNAs and Piwi proteins and govern the methylation and subsequent repression of transposons (PubMed:19460866, PubMed:25558067). Directly binds piRNAs, a class of 24 to 30 nucleotide RNAs that are generated by a Dicer-independent mechanism and are primarily derived from transposons and other repeated sequence elements (PubMed:19460866, PubMed:25558067). Strongly prefers a have adenine at position 10 of their guide (g10A preference) (PubMed:24757166, PubMed:25558067). Plays a key role in the piRNA amplification loop, also named ping-pong amplification cycle: antisense piRNA-bound Siwi and sense piRNA-bound Ago3 reciprocally cleave complementary transcripts, to couple the amplification of piRNAs with the repression of transposable elements (PubMed:25558067).</text>
</comment>
<comment type="cofactor">
    <cofactor evidence="1">
        <name>Mg(2+)</name>
        <dbReference type="ChEBI" id="CHEBI:18420"/>
    </cofactor>
</comment>
<comment type="subunit">
    <text evidence="7">Interacts (when symmetrically methylated) with Papi/TDRKH (PubMed:23970546). Interacts with Vasa.</text>
</comment>
<comment type="subcellular location">
    <subcellularLocation>
        <location evidence="9">Cytoplasm</location>
    </subcellularLocation>
    <text evidence="9">Component of the meiotic nuage, also named P granule, a germ-cell-specific organelle required to repress transposon activity during meiosis.</text>
</comment>
<comment type="tissue specificity">
    <text evidence="5">Highly expressed in the larval testis, pupal ovary and adult eggs.</text>
</comment>
<comment type="PTM">
    <text evidence="7">Arginine methylation is required for the interaction with Tudor domain-containing protein Papi/TDRKH.</text>
</comment>
<comment type="similarity">
    <text evidence="11">Belongs to the argonaute family. Piwi subfamily.</text>
</comment>
<dbReference type="EC" id="3.1.26.-"/>
<dbReference type="EMBL" id="AB332312">
    <property type="protein sequence ID" value="BAF73717.2"/>
    <property type="molecule type" value="mRNA"/>
</dbReference>
<dbReference type="EMBL" id="AB372007">
    <property type="protein sequence ID" value="BAF98575.1"/>
    <property type="molecule type" value="mRNA"/>
</dbReference>
<dbReference type="EMBL" id="BABH01012993">
    <property type="status" value="NOT_ANNOTATED_CDS"/>
    <property type="molecule type" value="Genomic_DNA"/>
</dbReference>
<dbReference type="RefSeq" id="NP_001098067.2">
    <property type="nucleotide sequence ID" value="NM_001104597.2"/>
</dbReference>
<dbReference type="RefSeq" id="XP_012550549.1">
    <property type="nucleotide sequence ID" value="XM_012695095.1"/>
</dbReference>
<dbReference type="SMR" id="A9ZSZ2"/>
<dbReference type="FunCoup" id="A9ZSZ2">
    <property type="interactions" value="53"/>
</dbReference>
<dbReference type="STRING" id="7091.A9ZSZ2"/>
<dbReference type="iPTMnet" id="A9ZSZ2"/>
<dbReference type="GeneID" id="100125337"/>
<dbReference type="KEGG" id="bmor:100125337"/>
<dbReference type="CTD" id="192669"/>
<dbReference type="eggNOG" id="KOG1042">
    <property type="taxonomic scope" value="Eukaryota"/>
</dbReference>
<dbReference type="HOGENOM" id="CLU_008813_0_0_1"/>
<dbReference type="InParanoid" id="A9ZSZ2"/>
<dbReference type="OrthoDB" id="399346at7088"/>
<dbReference type="Proteomes" id="UP000005204">
    <property type="component" value="Unassembled WGS sequence"/>
</dbReference>
<dbReference type="GO" id="GO:0005737">
    <property type="term" value="C:cytoplasm"/>
    <property type="evidence" value="ECO:0007669"/>
    <property type="project" value="UniProtKB-SubCell"/>
</dbReference>
<dbReference type="GO" id="GO:0004519">
    <property type="term" value="F:endonuclease activity"/>
    <property type="evidence" value="ECO:0007669"/>
    <property type="project" value="UniProtKB-KW"/>
</dbReference>
<dbReference type="GO" id="GO:0046872">
    <property type="term" value="F:metal ion binding"/>
    <property type="evidence" value="ECO:0007669"/>
    <property type="project" value="UniProtKB-KW"/>
</dbReference>
<dbReference type="GO" id="GO:0003723">
    <property type="term" value="F:RNA binding"/>
    <property type="evidence" value="ECO:0007669"/>
    <property type="project" value="UniProtKB-KW"/>
</dbReference>
<dbReference type="GO" id="GO:0030154">
    <property type="term" value="P:cell differentiation"/>
    <property type="evidence" value="ECO:0007669"/>
    <property type="project" value="UniProtKB-KW"/>
</dbReference>
<dbReference type="GO" id="GO:0051321">
    <property type="term" value="P:meiotic cell cycle"/>
    <property type="evidence" value="ECO:0007669"/>
    <property type="project" value="UniProtKB-KW"/>
</dbReference>
<dbReference type="GO" id="GO:0140965">
    <property type="term" value="P:secondary piRNA processing"/>
    <property type="evidence" value="ECO:0000315"/>
    <property type="project" value="FlyBase"/>
</dbReference>
<dbReference type="GO" id="GO:0007283">
    <property type="term" value="P:spermatogenesis"/>
    <property type="evidence" value="ECO:0007669"/>
    <property type="project" value="UniProtKB-KW"/>
</dbReference>
<dbReference type="CDD" id="cd02845">
    <property type="entry name" value="PAZ_piwi_like"/>
    <property type="match status" value="1"/>
</dbReference>
<dbReference type="CDD" id="cd04658">
    <property type="entry name" value="Piwi_piwi-like_Euk"/>
    <property type="match status" value="1"/>
</dbReference>
<dbReference type="FunFam" id="3.30.420.10:FF:000014">
    <property type="entry name" value="Piwi-like RNA-mediated gene silencing 1"/>
    <property type="match status" value="1"/>
</dbReference>
<dbReference type="FunFam" id="2.170.260.10:FF:000003">
    <property type="entry name" value="Piwi-like RNA-mediated gene silencing 2"/>
    <property type="match status" value="1"/>
</dbReference>
<dbReference type="Gene3D" id="3.40.50.2300">
    <property type="match status" value="1"/>
</dbReference>
<dbReference type="Gene3D" id="2.170.260.10">
    <property type="entry name" value="paz domain"/>
    <property type="match status" value="1"/>
</dbReference>
<dbReference type="Gene3D" id="3.30.420.10">
    <property type="entry name" value="Ribonuclease H-like superfamily/Ribonuclease H"/>
    <property type="match status" value="1"/>
</dbReference>
<dbReference type="InterPro" id="IPR003100">
    <property type="entry name" value="PAZ_dom"/>
</dbReference>
<dbReference type="InterPro" id="IPR036085">
    <property type="entry name" value="PAZ_dom_sf"/>
</dbReference>
<dbReference type="InterPro" id="IPR003165">
    <property type="entry name" value="Piwi"/>
</dbReference>
<dbReference type="InterPro" id="IPR012337">
    <property type="entry name" value="RNaseH-like_sf"/>
</dbReference>
<dbReference type="InterPro" id="IPR036397">
    <property type="entry name" value="RNaseH_sf"/>
</dbReference>
<dbReference type="PANTHER" id="PTHR22891">
    <property type="entry name" value="EUKARYOTIC TRANSLATION INITIATION FACTOR 2C"/>
    <property type="match status" value="1"/>
</dbReference>
<dbReference type="Pfam" id="PF02170">
    <property type="entry name" value="PAZ"/>
    <property type="match status" value="1"/>
</dbReference>
<dbReference type="Pfam" id="PF02171">
    <property type="entry name" value="Piwi"/>
    <property type="match status" value="1"/>
</dbReference>
<dbReference type="SMART" id="SM00949">
    <property type="entry name" value="PAZ"/>
    <property type="match status" value="1"/>
</dbReference>
<dbReference type="SMART" id="SM00950">
    <property type="entry name" value="Piwi"/>
    <property type="match status" value="1"/>
</dbReference>
<dbReference type="SUPFAM" id="SSF101690">
    <property type="entry name" value="PAZ domain"/>
    <property type="match status" value="1"/>
</dbReference>
<dbReference type="SUPFAM" id="SSF53098">
    <property type="entry name" value="Ribonuclease H-like"/>
    <property type="match status" value="1"/>
</dbReference>
<dbReference type="PROSITE" id="PS50821">
    <property type="entry name" value="PAZ"/>
    <property type="match status" value="1"/>
</dbReference>
<dbReference type="PROSITE" id="PS50822">
    <property type="entry name" value="PIWI"/>
    <property type="match status" value="1"/>
</dbReference>
<proteinExistence type="evidence at protein level"/>
<gene>
    <name type="primary">AGO3</name>
</gene>
<keyword id="KW-0963">Cytoplasm</keyword>
<keyword id="KW-0217">Developmental protein</keyword>
<keyword id="KW-0221">Differentiation</keyword>
<keyword id="KW-0255">Endonuclease</keyword>
<keyword id="KW-0378">Hydrolase</keyword>
<keyword id="KW-0460">Magnesium</keyword>
<keyword id="KW-0469">Meiosis</keyword>
<keyword id="KW-0479">Metal-binding</keyword>
<keyword id="KW-0488">Methylation</keyword>
<keyword id="KW-0540">Nuclease</keyword>
<keyword id="KW-1185">Reference proteome</keyword>
<keyword id="KW-0694">RNA-binding</keyword>
<keyword id="KW-0943">RNA-mediated gene silencing</keyword>
<keyword id="KW-0744">Spermatogenesis</keyword>
<accession>A9ZSZ2</accession>
<accession>A7BJS3</accession>
<accession>H9JHN9</accession>
<feature type="chain" id="PRO_0000439354" description="Piwi-like protein Ago3">
    <location>
        <begin position="1"/>
        <end position="926"/>
    </location>
</feature>
<feature type="domain" description="PAZ" evidence="2">
    <location>
        <begin position="339"/>
        <end position="455"/>
    </location>
</feature>
<feature type="domain" description="Piwi" evidence="3">
    <location>
        <begin position="620"/>
        <end position="912"/>
    </location>
</feature>
<feature type="region of interest" description="Disordered" evidence="4">
    <location>
        <begin position="1"/>
        <end position="62"/>
    </location>
</feature>
<feature type="compositionally biased region" description="Low complexity" evidence="4">
    <location>
        <begin position="26"/>
        <end position="56"/>
    </location>
</feature>
<feature type="active site" evidence="1">
    <location>
        <position position="697"/>
    </location>
</feature>
<feature type="active site" evidence="1">
    <location>
        <position position="735"/>
    </location>
</feature>
<feature type="active site" evidence="1">
    <location>
        <position position="767"/>
    </location>
</feature>
<feature type="active site" evidence="1">
    <location>
        <position position="901"/>
    </location>
</feature>
<feature type="binding site" evidence="1">
    <location>
        <position position="672"/>
    </location>
    <ligand>
        <name>Mg(2+)</name>
        <dbReference type="ChEBI" id="CHEBI:18420"/>
    </ligand>
</feature>
<feature type="binding site" evidence="1">
    <location>
        <position position="926"/>
    </location>
    <ligand>
        <name>Mg(2+)</name>
        <dbReference type="ChEBI" id="CHEBI:18420"/>
    </ligand>
</feature>
<feature type="mutagenesis site" description="Does not affect ability to recognize adenine at position 10 of piRNAs (g10A preference)." evidence="8">
    <original>Y</original>
    <variation>L</variation>
    <location>
        <position position="633"/>
    </location>
</feature>
<feature type="sequence conflict" description="In Ref. 1; BAF73717." evidence="11" ref="1">
    <original>N</original>
    <variation>S</variation>
    <location>
        <position position="108"/>
    </location>
</feature>
<feature type="sequence conflict" description="In Ref. 1; BAF73717." evidence="11" ref="1">
    <original>I</original>
    <variation>V</variation>
    <location>
        <position position="119"/>
    </location>
</feature>
<feature type="sequence conflict" description="In Ref. 1; BAF73717." evidence="11" ref="1">
    <original>A</original>
    <variation>T</variation>
    <location>
        <position position="148"/>
    </location>
</feature>
<feature type="sequence conflict" description="In Ref. 2; BAF98575." evidence="11" ref="2">
    <original>H</original>
    <variation>Y</variation>
    <location>
        <position position="219"/>
    </location>
</feature>
<feature type="sequence conflict" description="In Ref. 2; BAF98575." evidence="11" ref="2">
    <original>V</original>
    <variation>I</variation>
    <location>
        <position position="401"/>
    </location>
</feature>